<organism>
    <name type="scientific">Wolinella succinogenes (strain ATCC 29543 / DSM 1740 / CCUG 13145 / JCM 31913 / LMG 7466 / NCTC 11488 / FDC 602W)</name>
    <name type="common">Vibrio succinogenes</name>
    <dbReference type="NCBI Taxonomy" id="273121"/>
    <lineage>
        <taxon>Bacteria</taxon>
        <taxon>Pseudomonadati</taxon>
        <taxon>Campylobacterota</taxon>
        <taxon>Epsilonproteobacteria</taxon>
        <taxon>Campylobacterales</taxon>
        <taxon>Helicobacteraceae</taxon>
        <taxon>Wolinella</taxon>
    </lineage>
</organism>
<keyword id="KW-0004">4Fe-4S</keyword>
<keyword id="KW-0963">Cytoplasm</keyword>
<keyword id="KW-0408">Iron</keyword>
<keyword id="KW-0411">Iron-sulfur</keyword>
<keyword id="KW-0479">Metal-binding</keyword>
<keyword id="KW-1185">Reference proteome</keyword>
<keyword id="KW-0949">S-adenosyl-L-methionine</keyword>
<keyword id="KW-0808">Transferase</keyword>
<accession>Q9ZEN7</accession>
<dbReference type="EC" id="2.8.4.4" evidence="1"/>
<dbReference type="EMBL" id="AJ131242">
    <property type="protein sequence ID" value="CAA10332.1"/>
    <property type="molecule type" value="Genomic_DNA"/>
</dbReference>
<dbReference type="EMBL" id="BX571661">
    <property type="protein sequence ID" value="CAE10791.1"/>
    <property type="molecule type" value="Genomic_DNA"/>
</dbReference>
<dbReference type="RefSeq" id="WP_011139574.1">
    <property type="nucleotide sequence ID" value="NC_005090.1"/>
</dbReference>
<dbReference type="SMR" id="Q9ZEN7"/>
<dbReference type="STRING" id="273121.WS1769"/>
<dbReference type="KEGG" id="wsu:WS1769"/>
<dbReference type="eggNOG" id="COG0621">
    <property type="taxonomic scope" value="Bacteria"/>
</dbReference>
<dbReference type="HOGENOM" id="CLU_018697_0_1_7"/>
<dbReference type="Proteomes" id="UP000000422">
    <property type="component" value="Chromosome"/>
</dbReference>
<dbReference type="GO" id="GO:0005829">
    <property type="term" value="C:cytosol"/>
    <property type="evidence" value="ECO:0007669"/>
    <property type="project" value="TreeGrafter"/>
</dbReference>
<dbReference type="GO" id="GO:0051539">
    <property type="term" value="F:4 iron, 4 sulfur cluster binding"/>
    <property type="evidence" value="ECO:0007669"/>
    <property type="project" value="UniProtKB-UniRule"/>
</dbReference>
<dbReference type="GO" id="GO:0035599">
    <property type="term" value="F:aspartic acid methylthiotransferase activity"/>
    <property type="evidence" value="ECO:0007669"/>
    <property type="project" value="TreeGrafter"/>
</dbReference>
<dbReference type="GO" id="GO:0046872">
    <property type="term" value="F:metal ion binding"/>
    <property type="evidence" value="ECO:0007669"/>
    <property type="project" value="UniProtKB-KW"/>
</dbReference>
<dbReference type="GO" id="GO:0103039">
    <property type="term" value="F:protein methylthiotransferase activity"/>
    <property type="evidence" value="ECO:0007669"/>
    <property type="project" value="UniProtKB-EC"/>
</dbReference>
<dbReference type="GO" id="GO:0006400">
    <property type="term" value="P:tRNA modification"/>
    <property type="evidence" value="ECO:0007669"/>
    <property type="project" value="InterPro"/>
</dbReference>
<dbReference type="CDD" id="cd01335">
    <property type="entry name" value="Radical_SAM"/>
    <property type="match status" value="1"/>
</dbReference>
<dbReference type="Gene3D" id="3.40.50.12160">
    <property type="entry name" value="Methylthiotransferase, N-terminal domain"/>
    <property type="match status" value="1"/>
</dbReference>
<dbReference type="Gene3D" id="2.40.50.140">
    <property type="entry name" value="Nucleic acid-binding proteins"/>
    <property type="match status" value="1"/>
</dbReference>
<dbReference type="Gene3D" id="3.80.30.20">
    <property type="entry name" value="tm_1862 like domain"/>
    <property type="match status" value="1"/>
</dbReference>
<dbReference type="HAMAP" id="MF_01865">
    <property type="entry name" value="MTTase_RimO"/>
    <property type="match status" value="1"/>
</dbReference>
<dbReference type="InterPro" id="IPR006638">
    <property type="entry name" value="Elp3/MiaA/NifB-like_rSAM"/>
</dbReference>
<dbReference type="InterPro" id="IPR005839">
    <property type="entry name" value="Methylthiotransferase"/>
</dbReference>
<dbReference type="InterPro" id="IPR020612">
    <property type="entry name" value="Methylthiotransferase_CS"/>
</dbReference>
<dbReference type="InterPro" id="IPR013848">
    <property type="entry name" value="Methylthiotransferase_N"/>
</dbReference>
<dbReference type="InterPro" id="IPR038135">
    <property type="entry name" value="Methylthiotransferase_N_sf"/>
</dbReference>
<dbReference type="InterPro" id="IPR012340">
    <property type="entry name" value="NA-bd_OB-fold"/>
</dbReference>
<dbReference type="InterPro" id="IPR005840">
    <property type="entry name" value="Ribosomal_uS12_MeSTrfase_RimO"/>
</dbReference>
<dbReference type="InterPro" id="IPR007197">
    <property type="entry name" value="rSAM"/>
</dbReference>
<dbReference type="InterPro" id="IPR023404">
    <property type="entry name" value="rSAM_horseshoe"/>
</dbReference>
<dbReference type="InterPro" id="IPR002792">
    <property type="entry name" value="TRAM_dom"/>
</dbReference>
<dbReference type="NCBIfam" id="TIGR01125">
    <property type="entry name" value="30S ribosomal protein S12 methylthiotransferase RimO"/>
    <property type="match status" value="1"/>
</dbReference>
<dbReference type="NCBIfam" id="TIGR00089">
    <property type="entry name" value="MiaB/RimO family radical SAM methylthiotransferase"/>
    <property type="match status" value="1"/>
</dbReference>
<dbReference type="PANTHER" id="PTHR43837">
    <property type="entry name" value="RIBOSOMAL PROTEIN S12 METHYLTHIOTRANSFERASE RIMO"/>
    <property type="match status" value="1"/>
</dbReference>
<dbReference type="PANTHER" id="PTHR43837:SF1">
    <property type="entry name" value="RIBOSOMAL PROTEIN US12 METHYLTHIOTRANSFERASE RIMO"/>
    <property type="match status" value="1"/>
</dbReference>
<dbReference type="Pfam" id="PF04055">
    <property type="entry name" value="Radical_SAM"/>
    <property type="match status" value="1"/>
</dbReference>
<dbReference type="Pfam" id="PF18693">
    <property type="entry name" value="TRAM_2"/>
    <property type="match status" value="1"/>
</dbReference>
<dbReference type="Pfam" id="PF00919">
    <property type="entry name" value="UPF0004"/>
    <property type="match status" value="1"/>
</dbReference>
<dbReference type="SFLD" id="SFLDG01082">
    <property type="entry name" value="B12-binding_domain_containing"/>
    <property type="match status" value="1"/>
</dbReference>
<dbReference type="SFLD" id="SFLDS00029">
    <property type="entry name" value="Radical_SAM"/>
    <property type="match status" value="1"/>
</dbReference>
<dbReference type="SFLD" id="SFLDF00274">
    <property type="entry name" value="ribosomal_protein_S12_methylth"/>
    <property type="match status" value="1"/>
</dbReference>
<dbReference type="SMART" id="SM00729">
    <property type="entry name" value="Elp3"/>
    <property type="match status" value="1"/>
</dbReference>
<dbReference type="SUPFAM" id="SSF102114">
    <property type="entry name" value="Radical SAM enzymes"/>
    <property type="match status" value="1"/>
</dbReference>
<dbReference type="PROSITE" id="PS51449">
    <property type="entry name" value="MTTASE_N"/>
    <property type="match status" value="1"/>
</dbReference>
<dbReference type="PROSITE" id="PS01278">
    <property type="entry name" value="MTTASE_RADICAL"/>
    <property type="match status" value="1"/>
</dbReference>
<dbReference type="PROSITE" id="PS51918">
    <property type="entry name" value="RADICAL_SAM"/>
    <property type="match status" value="1"/>
</dbReference>
<feature type="chain" id="PRO_0000375067" description="Ribosomal protein uS12 methylthiotransferase RimO">
    <location>
        <begin position="1"/>
        <end position="439"/>
    </location>
</feature>
<feature type="domain" description="MTTase N-terminal" evidence="1">
    <location>
        <begin position="3"/>
        <end position="115"/>
    </location>
</feature>
<feature type="domain" description="Radical SAM core" evidence="2">
    <location>
        <begin position="133"/>
        <end position="362"/>
    </location>
</feature>
<feature type="binding site" evidence="1">
    <location>
        <position position="12"/>
    </location>
    <ligand>
        <name>[4Fe-4S] cluster</name>
        <dbReference type="ChEBI" id="CHEBI:49883"/>
        <label>1</label>
    </ligand>
</feature>
<feature type="binding site" evidence="1">
    <location>
        <position position="46"/>
    </location>
    <ligand>
        <name>[4Fe-4S] cluster</name>
        <dbReference type="ChEBI" id="CHEBI:49883"/>
        <label>1</label>
    </ligand>
</feature>
<feature type="binding site" evidence="1">
    <location>
        <position position="78"/>
    </location>
    <ligand>
        <name>[4Fe-4S] cluster</name>
        <dbReference type="ChEBI" id="CHEBI:49883"/>
        <label>1</label>
    </ligand>
</feature>
<feature type="binding site" evidence="1">
    <location>
        <position position="147"/>
    </location>
    <ligand>
        <name>[4Fe-4S] cluster</name>
        <dbReference type="ChEBI" id="CHEBI:49883"/>
        <label>2</label>
        <note>4Fe-4S-S-AdoMet</note>
    </ligand>
</feature>
<feature type="binding site" evidence="1">
    <location>
        <position position="151"/>
    </location>
    <ligand>
        <name>[4Fe-4S] cluster</name>
        <dbReference type="ChEBI" id="CHEBI:49883"/>
        <label>2</label>
        <note>4Fe-4S-S-AdoMet</note>
    </ligand>
</feature>
<feature type="binding site" evidence="1">
    <location>
        <position position="154"/>
    </location>
    <ligand>
        <name>[4Fe-4S] cluster</name>
        <dbReference type="ChEBI" id="CHEBI:49883"/>
        <label>2</label>
        <note>4Fe-4S-S-AdoMet</note>
    </ligand>
</feature>
<proteinExistence type="inferred from homology"/>
<name>RIMO_WOLSU</name>
<sequence length="439" mass="49941">MSKKLHLISLGCTKNLVDSEVMLGRLKSYEITPLIEKADVIIVNTCGFIEAAKQESLSVLFEALERRKKGAILVASGCLSERYHEELLREIPEIDIITGVGDYDKIDQMVRERQGFHSGEVFLASEEQERVITGSSVHAYVKLSEGCNQTCSFCAIPQFKGKLHSRTLESTLKEVKNLIAKGFTDFSFIAQDTSSYLRDRGEKEGLIQLIGALDSLEGIKSARILYLYPSTASAKLIQAIQKSQVVQNYFDMPLQHIAESMLKRMKRGANQKKHKELLERMRQVPHSFVRTTLILGHPGESEEEFEELCRFLEEFRFDRVNLFAYSDEEGTSAHKMEGKLDKRVINARLKRLDKIIQKQHRALLKEMVGQEIPVILEGGSSEHEFFYSARDARWAPEIDGEILINETLLPQPAPGHYWAKITQVAGKQLLATLTRRWEK</sequence>
<comment type="function">
    <text evidence="1">Catalyzes the methylthiolation of an aspartic acid residue of ribosomal protein uS12.</text>
</comment>
<comment type="catalytic activity">
    <reaction evidence="1">
        <text>L-aspartate(89)-[ribosomal protein uS12]-hydrogen + (sulfur carrier)-SH + AH2 + 2 S-adenosyl-L-methionine = 3-methylsulfanyl-L-aspartate(89)-[ribosomal protein uS12]-hydrogen + (sulfur carrier)-H + 5'-deoxyadenosine + L-methionine + A + S-adenosyl-L-homocysteine + 2 H(+)</text>
        <dbReference type="Rhea" id="RHEA:37087"/>
        <dbReference type="Rhea" id="RHEA-COMP:10460"/>
        <dbReference type="Rhea" id="RHEA-COMP:10461"/>
        <dbReference type="Rhea" id="RHEA-COMP:14737"/>
        <dbReference type="Rhea" id="RHEA-COMP:14739"/>
        <dbReference type="ChEBI" id="CHEBI:13193"/>
        <dbReference type="ChEBI" id="CHEBI:15378"/>
        <dbReference type="ChEBI" id="CHEBI:17319"/>
        <dbReference type="ChEBI" id="CHEBI:17499"/>
        <dbReference type="ChEBI" id="CHEBI:29917"/>
        <dbReference type="ChEBI" id="CHEBI:29961"/>
        <dbReference type="ChEBI" id="CHEBI:57844"/>
        <dbReference type="ChEBI" id="CHEBI:57856"/>
        <dbReference type="ChEBI" id="CHEBI:59789"/>
        <dbReference type="ChEBI" id="CHEBI:64428"/>
        <dbReference type="ChEBI" id="CHEBI:73599"/>
        <dbReference type="EC" id="2.8.4.4"/>
    </reaction>
</comment>
<comment type="cofactor">
    <cofactor evidence="1">
        <name>[4Fe-4S] cluster</name>
        <dbReference type="ChEBI" id="CHEBI:49883"/>
    </cofactor>
    <text evidence="1">Binds 2 [4Fe-4S] clusters. One cluster is coordinated with 3 cysteines and an exchangeable S-adenosyl-L-methionine.</text>
</comment>
<comment type="subcellular location">
    <subcellularLocation>
        <location evidence="1">Cytoplasm</location>
    </subcellularLocation>
</comment>
<comment type="similarity">
    <text evidence="1">Belongs to the methylthiotransferase family. RimO subfamily.</text>
</comment>
<protein>
    <recommendedName>
        <fullName evidence="1">Ribosomal protein uS12 methylthiotransferase RimO</fullName>
        <shortName evidence="1">uS12 MTTase</shortName>
        <shortName evidence="1">uS12 methylthiotransferase</shortName>
        <ecNumber evidence="1">2.8.4.4</ecNumber>
    </recommendedName>
    <alternativeName>
        <fullName evidence="1">Ribosomal protein uS12 (aspartate-C(3))-methylthiotransferase</fullName>
    </alternativeName>
    <alternativeName>
        <fullName evidence="1">Ribosome maturation factor RimO</fullName>
    </alternativeName>
</protein>
<evidence type="ECO:0000255" key="1">
    <source>
        <dbReference type="HAMAP-Rule" id="MF_01865"/>
    </source>
</evidence>
<evidence type="ECO:0000255" key="2">
    <source>
        <dbReference type="PROSITE-ProRule" id="PRU01266"/>
    </source>
</evidence>
<gene>
    <name evidence="1" type="primary">rimO</name>
    <name type="ordered locus">WS1769</name>
</gene>
<reference key="1">
    <citation type="journal article" date="2000" name="J. Bacteriol.">
        <title>Transport of C4-dicarboxylates in Wolinella succinogenes.</title>
        <authorList>
            <person name="Ullmann R."/>
            <person name="Gross R."/>
            <person name="Simon J."/>
            <person name="Unden G."/>
            <person name="Kroeger A."/>
        </authorList>
    </citation>
    <scope>NUCLEOTIDE SEQUENCE [GENOMIC DNA]</scope>
</reference>
<reference key="2">
    <citation type="journal article" date="2003" name="Proc. Natl. Acad. Sci. U.S.A.">
        <title>Complete genome sequence and analysis of Wolinella succinogenes.</title>
        <authorList>
            <person name="Baar C."/>
            <person name="Eppinger M."/>
            <person name="Raddatz G."/>
            <person name="Simon J."/>
            <person name="Lanz C."/>
            <person name="Klimmek O."/>
            <person name="Nandakumar R."/>
            <person name="Gross R."/>
            <person name="Rosinus A."/>
            <person name="Keller H."/>
            <person name="Jagtap P."/>
            <person name="Linke B."/>
            <person name="Meyer F."/>
            <person name="Lederer H."/>
            <person name="Schuster S.C."/>
        </authorList>
    </citation>
    <scope>NUCLEOTIDE SEQUENCE [LARGE SCALE GENOMIC DNA]</scope>
    <source>
        <strain>ATCC 29543 / DSM 1740 / CCUG 13145 / JCM 31913 / LMG 7466 / NCTC 11488 / FDC 602W</strain>
    </source>
</reference>